<feature type="initiator methionine" description="Removed" evidence="1">
    <location>
        <position position="1"/>
    </location>
</feature>
<feature type="chain" id="PRO_0000166318" description="FMN-dependent NADH:quinone oxidoreductase">
    <location>
        <begin position="2"/>
        <end position="201"/>
    </location>
</feature>
<feature type="binding site" evidence="2 3 4">
    <location>
        <position position="10"/>
    </location>
    <ligand>
        <name>FMN</name>
        <dbReference type="ChEBI" id="CHEBI:58210"/>
    </ligand>
</feature>
<feature type="binding site" evidence="2 3 4">
    <location>
        <begin position="16"/>
        <end position="18"/>
    </location>
    <ligand>
        <name>FMN</name>
        <dbReference type="ChEBI" id="CHEBI:58210"/>
    </ligand>
</feature>
<feature type="binding site" evidence="2 3 4">
    <location>
        <begin position="96"/>
        <end position="99"/>
    </location>
    <ligand>
        <name>FMN</name>
        <dbReference type="ChEBI" id="CHEBI:58210"/>
    </ligand>
</feature>
<feature type="binding site" evidence="2">
    <location>
        <begin position="140"/>
        <end position="143"/>
    </location>
    <ligand>
        <name>FMN</name>
        <dbReference type="ChEBI" id="CHEBI:58210"/>
    </ligand>
</feature>
<feature type="strand" evidence="6">
    <location>
        <begin position="3"/>
        <end position="8"/>
    </location>
</feature>
<feature type="helix" evidence="6">
    <location>
        <begin position="13"/>
        <end position="15"/>
    </location>
</feature>
<feature type="helix" evidence="6">
    <location>
        <begin position="17"/>
        <end position="32"/>
    </location>
</feature>
<feature type="strand" evidence="6">
    <location>
        <begin position="37"/>
        <end position="42"/>
    </location>
</feature>
<feature type="turn" evidence="6">
    <location>
        <begin position="43"/>
        <end position="47"/>
    </location>
</feature>
<feature type="helix" evidence="6">
    <location>
        <begin position="53"/>
        <end position="58"/>
    </location>
</feature>
<feature type="helix" evidence="6">
    <location>
        <begin position="68"/>
        <end position="86"/>
    </location>
</feature>
<feature type="strand" evidence="6">
    <location>
        <begin position="88"/>
        <end position="93"/>
    </location>
</feature>
<feature type="helix" evidence="6">
    <location>
        <begin position="103"/>
        <end position="112"/>
    </location>
</feature>
<feature type="turn" evidence="6">
    <location>
        <begin position="115"/>
        <end position="117"/>
    </location>
</feature>
<feature type="strand" evidence="6">
    <location>
        <begin position="118"/>
        <end position="122"/>
    </location>
</feature>
<feature type="strand" evidence="6">
    <location>
        <begin position="125"/>
        <end position="129"/>
    </location>
</feature>
<feature type="strand" evidence="6">
    <location>
        <begin position="134"/>
        <end position="139"/>
    </location>
</feature>
<feature type="helix" evidence="6">
    <location>
        <begin position="153"/>
        <end position="163"/>
    </location>
</feature>
<feature type="strand" evidence="6">
    <location>
        <begin position="168"/>
        <end position="173"/>
    </location>
</feature>
<feature type="helix" evidence="6">
    <location>
        <begin position="186"/>
        <end position="199"/>
    </location>
</feature>
<sequence length="201" mass="21600">MSKVLVLKSSILATSSQSNQLADFFVEQWQAAHAGDQITVRDLAAQPIPVLDGELVGALRPSGTALTPRQQEALALSDELIAELQANDVIVIAAPMYNFNIPTQLKNYFDMIARAGVTFRYTEKGPEGLVTGKRAIILTSRGGIHKDTPTDLVVPYLRLFLGFIGITDVEFVFAEGIAYGPEVATKAQADAKTLLAQVVAA</sequence>
<dbReference type="EC" id="1.6.5.-" evidence="2"/>
<dbReference type="EC" id="1.7.1.17" evidence="2"/>
<dbReference type="EMBL" id="AL590842">
    <property type="protein sequence ID" value="CAL20951.1"/>
    <property type="molecule type" value="Genomic_DNA"/>
</dbReference>
<dbReference type="EMBL" id="AE009952">
    <property type="protein sequence ID" value="AAM85576.1"/>
    <property type="molecule type" value="Genomic_DNA"/>
</dbReference>
<dbReference type="EMBL" id="AE017042">
    <property type="protein sequence ID" value="AAS62319.1"/>
    <property type="molecule type" value="Genomic_DNA"/>
</dbReference>
<dbReference type="PIR" id="AD0283">
    <property type="entry name" value="AD0283"/>
</dbReference>
<dbReference type="RefSeq" id="WP_002211004.1">
    <property type="nucleotide sequence ID" value="NZ_WUCM01000054.1"/>
</dbReference>
<dbReference type="RefSeq" id="YP_002347290.1">
    <property type="nucleotide sequence ID" value="NC_003143.1"/>
</dbReference>
<dbReference type="PDB" id="4ESE">
    <property type="method" value="X-ray"/>
    <property type="resolution" value="1.45 A"/>
    <property type="chains" value="A=1-201"/>
</dbReference>
<dbReference type="PDB" id="5JRO">
    <property type="method" value="X-ray"/>
    <property type="resolution" value="2.54 A"/>
    <property type="chains" value="A/B=1-201"/>
</dbReference>
<dbReference type="PDBsum" id="4ESE"/>
<dbReference type="PDBsum" id="5JRO"/>
<dbReference type="SMR" id="Q8ZE60"/>
<dbReference type="PaxDb" id="214092-YPO2323"/>
<dbReference type="DNASU" id="1146957"/>
<dbReference type="EnsemblBacteria" id="AAS62319">
    <property type="protein sequence ID" value="AAS62319"/>
    <property type="gene ID" value="YP_2110"/>
</dbReference>
<dbReference type="GeneID" id="57976351"/>
<dbReference type="KEGG" id="ype:YPO2323"/>
<dbReference type="KEGG" id="ypk:y2010"/>
<dbReference type="KEGG" id="ypm:YP_2110"/>
<dbReference type="PATRIC" id="fig|214092.21.peg.2728"/>
<dbReference type="eggNOG" id="COG1182">
    <property type="taxonomic scope" value="Bacteria"/>
</dbReference>
<dbReference type="HOGENOM" id="CLU_088964_0_0_6"/>
<dbReference type="OMA" id="FIARPRV"/>
<dbReference type="OrthoDB" id="9787136at2"/>
<dbReference type="EvolutionaryTrace" id="Q8ZE60"/>
<dbReference type="Proteomes" id="UP000000815">
    <property type="component" value="Chromosome"/>
</dbReference>
<dbReference type="Proteomes" id="UP000001019">
    <property type="component" value="Chromosome"/>
</dbReference>
<dbReference type="Proteomes" id="UP000002490">
    <property type="component" value="Chromosome"/>
</dbReference>
<dbReference type="GO" id="GO:0009055">
    <property type="term" value="F:electron transfer activity"/>
    <property type="evidence" value="ECO:0007669"/>
    <property type="project" value="UniProtKB-UniRule"/>
</dbReference>
<dbReference type="GO" id="GO:0010181">
    <property type="term" value="F:FMN binding"/>
    <property type="evidence" value="ECO:0007669"/>
    <property type="project" value="UniProtKB-UniRule"/>
</dbReference>
<dbReference type="GO" id="GO:0016652">
    <property type="term" value="F:oxidoreductase activity, acting on NAD(P)H as acceptor"/>
    <property type="evidence" value="ECO:0007669"/>
    <property type="project" value="UniProtKB-UniRule"/>
</dbReference>
<dbReference type="GO" id="GO:0016655">
    <property type="term" value="F:oxidoreductase activity, acting on NAD(P)H, quinone or similar compound as acceptor"/>
    <property type="evidence" value="ECO:0007669"/>
    <property type="project" value="InterPro"/>
</dbReference>
<dbReference type="FunFam" id="3.40.50.360:FF:000010">
    <property type="entry name" value="FMN-dependent NADH-azoreductase"/>
    <property type="match status" value="1"/>
</dbReference>
<dbReference type="Gene3D" id="3.40.50.360">
    <property type="match status" value="1"/>
</dbReference>
<dbReference type="HAMAP" id="MF_01216">
    <property type="entry name" value="Azoreductase_type1"/>
    <property type="match status" value="1"/>
</dbReference>
<dbReference type="InterPro" id="IPR003680">
    <property type="entry name" value="Flavodoxin_fold"/>
</dbReference>
<dbReference type="InterPro" id="IPR029039">
    <property type="entry name" value="Flavoprotein-like_sf"/>
</dbReference>
<dbReference type="InterPro" id="IPR050104">
    <property type="entry name" value="FMN-dep_NADH:Q_OxRdtase_AzoR1"/>
</dbReference>
<dbReference type="InterPro" id="IPR023048">
    <property type="entry name" value="NADH:quinone_OxRdtase_FMN_depd"/>
</dbReference>
<dbReference type="PANTHER" id="PTHR43741">
    <property type="entry name" value="FMN-DEPENDENT NADH-AZOREDUCTASE 1"/>
    <property type="match status" value="1"/>
</dbReference>
<dbReference type="PANTHER" id="PTHR43741:SF2">
    <property type="entry name" value="FMN-DEPENDENT NADH:QUINONE OXIDOREDUCTASE"/>
    <property type="match status" value="1"/>
</dbReference>
<dbReference type="Pfam" id="PF02525">
    <property type="entry name" value="Flavodoxin_2"/>
    <property type="match status" value="1"/>
</dbReference>
<dbReference type="SUPFAM" id="SSF52218">
    <property type="entry name" value="Flavoproteins"/>
    <property type="match status" value="1"/>
</dbReference>
<proteinExistence type="evidence at protein level"/>
<accession>Q8ZE60</accession>
<accession>Q0WEJ8</accession>
<protein>
    <recommendedName>
        <fullName evidence="2">FMN-dependent NADH:quinone oxidoreductase</fullName>
        <ecNumber evidence="2">1.6.5.-</ecNumber>
    </recommendedName>
    <alternativeName>
        <fullName evidence="2">Azo-dye reductase</fullName>
    </alternativeName>
    <alternativeName>
        <fullName evidence="2">FMN-dependent NADH-azo compound oxidoreductase</fullName>
    </alternativeName>
    <alternativeName>
        <fullName evidence="2">FMN-dependent NADH-azoreductase</fullName>
        <ecNumber evidence="2">1.7.1.17</ecNumber>
    </alternativeName>
</protein>
<organism>
    <name type="scientific">Yersinia pestis</name>
    <dbReference type="NCBI Taxonomy" id="632"/>
    <lineage>
        <taxon>Bacteria</taxon>
        <taxon>Pseudomonadati</taxon>
        <taxon>Pseudomonadota</taxon>
        <taxon>Gammaproteobacteria</taxon>
        <taxon>Enterobacterales</taxon>
        <taxon>Yersiniaceae</taxon>
        <taxon>Yersinia</taxon>
    </lineage>
</organism>
<gene>
    <name evidence="2" type="primary">azoR</name>
    <name type="ordered locus">YPO2323</name>
    <name type="ordered locus">y2010</name>
    <name type="ordered locus">YP_2110</name>
</gene>
<reference key="1">
    <citation type="journal article" date="2001" name="Nature">
        <title>Genome sequence of Yersinia pestis, the causative agent of plague.</title>
        <authorList>
            <person name="Parkhill J."/>
            <person name="Wren B.W."/>
            <person name="Thomson N.R."/>
            <person name="Titball R.W."/>
            <person name="Holden M.T.G."/>
            <person name="Prentice M.B."/>
            <person name="Sebaihia M."/>
            <person name="James K.D."/>
            <person name="Churcher C.M."/>
            <person name="Mungall K.L."/>
            <person name="Baker S."/>
            <person name="Basham D."/>
            <person name="Bentley S.D."/>
            <person name="Brooks K."/>
            <person name="Cerdeno-Tarraga A.-M."/>
            <person name="Chillingworth T."/>
            <person name="Cronin A."/>
            <person name="Davies R.M."/>
            <person name="Davis P."/>
            <person name="Dougan G."/>
            <person name="Feltwell T."/>
            <person name="Hamlin N."/>
            <person name="Holroyd S."/>
            <person name="Jagels K."/>
            <person name="Karlyshev A.V."/>
            <person name="Leather S."/>
            <person name="Moule S."/>
            <person name="Oyston P.C.F."/>
            <person name="Quail M.A."/>
            <person name="Rutherford K.M."/>
            <person name="Simmonds M."/>
            <person name="Skelton J."/>
            <person name="Stevens K."/>
            <person name="Whitehead S."/>
            <person name="Barrell B.G."/>
        </authorList>
    </citation>
    <scope>NUCLEOTIDE SEQUENCE [LARGE SCALE GENOMIC DNA]</scope>
    <source>
        <strain>CO-92 / Biovar Orientalis</strain>
    </source>
</reference>
<reference key="2">
    <citation type="journal article" date="2002" name="J. Bacteriol.">
        <title>Genome sequence of Yersinia pestis KIM.</title>
        <authorList>
            <person name="Deng W."/>
            <person name="Burland V."/>
            <person name="Plunkett G. III"/>
            <person name="Boutin A."/>
            <person name="Mayhew G.F."/>
            <person name="Liss P."/>
            <person name="Perna N.T."/>
            <person name="Rose D.J."/>
            <person name="Mau B."/>
            <person name="Zhou S."/>
            <person name="Schwartz D.C."/>
            <person name="Fetherston J.D."/>
            <person name="Lindler L.E."/>
            <person name="Brubaker R.R."/>
            <person name="Plano G.V."/>
            <person name="Straley S.C."/>
            <person name="McDonough K.A."/>
            <person name="Nilles M.L."/>
            <person name="Matson J.S."/>
            <person name="Blattner F.R."/>
            <person name="Perry R.D."/>
        </authorList>
    </citation>
    <scope>NUCLEOTIDE SEQUENCE [LARGE SCALE GENOMIC DNA]</scope>
    <source>
        <strain>KIM10+ / Biovar Mediaevalis</strain>
    </source>
</reference>
<reference key="3">
    <citation type="journal article" date="2004" name="DNA Res.">
        <title>Complete genome sequence of Yersinia pestis strain 91001, an isolate avirulent to humans.</title>
        <authorList>
            <person name="Song Y."/>
            <person name="Tong Z."/>
            <person name="Wang J."/>
            <person name="Wang L."/>
            <person name="Guo Z."/>
            <person name="Han Y."/>
            <person name="Zhang J."/>
            <person name="Pei D."/>
            <person name="Zhou D."/>
            <person name="Qin H."/>
            <person name="Pang X."/>
            <person name="Han Y."/>
            <person name="Zhai J."/>
            <person name="Li M."/>
            <person name="Cui B."/>
            <person name="Qi Z."/>
            <person name="Jin L."/>
            <person name="Dai R."/>
            <person name="Chen F."/>
            <person name="Li S."/>
            <person name="Ye C."/>
            <person name="Du Z."/>
            <person name="Lin W."/>
            <person name="Wang J."/>
            <person name="Yu J."/>
            <person name="Yang H."/>
            <person name="Wang J."/>
            <person name="Huang P."/>
            <person name="Yang R."/>
        </authorList>
    </citation>
    <scope>NUCLEOTIDE SEQUENCE [LARGE SCALE GENOMIC DNA]</scope>
    <source>
        <strain>91001 / Biovar Mediaevalis</strain>
    </source>
</reference>
<reference evidence="4" key="4">
    <citation type="submission" date="2012-04" db="PDB data bank">
        <title>The crystal structure of acyl carrier protein phosphodiesterase from Yersinia pestis CO92 in complex with FMN.</title>
        <authorList>
            <person name="Tan K."/>
            <person name="Gu M."/>
            <person name="Kwon K."/>
            <person name="Anderson W.F."/>
            <person name="Joachimiak A."/>
        </authorList>
    </citation>
    <scope>X-RAY CRYSTALLOGRAPHY (1.45 ANGSTROMS) IN COMPLEX WITH FMN</scope>
</reference>
<reference evidence="5" key="5">
    <citation type="submission" date="2016-05" db="PDB data bank">
        <title>The crystal structure of azoreductase from Yersinia pestis CO92 in its Apo form.</title>
        <authorList>
            <person name="Tan K."/>
            <person name="Gu M."/>
            <person name="Kwon K."/>
            <person name="Anderson W.F."/>
            <person name="Joachimiak A."/>
        </authorList>
    </citation>
    <scope>X-RAY CRYSTALLOGRAPHY (2.54 ANGSTROMS)</scope>
</reference>
<keyword id="KW-0002">3D-structure</keyword>
<keyword id="KW-0285">Flavoprotein</keyword>
<keyword id="KW-0288">FMN</keyword>
<keyword id="KW-0520">NAD</keyword>
<keyword id="KW-0560">Oxidoreductase</keyword>
<keyword id="KW-1185">Reference proteome</keyword>
<evidence type="ECO:0000250" key="1"/>
<evidence type="ECO:0000255" key="2">
    <source>
        <dbReference type="HAMAP-Rule" id="MF_01216"/>
    </source>
</evidence>
<evidence type="ECO:0000269" key="3">
    <source ref="4"/>
</evidence>
<evidence type="ECO:0007744" key="4">
    <source>
        <dbReference type="PDB" id="4ESE"/>
    </source>
</evidence>
<evidence type="ECO:0007744" key="5">
    <source>
        <dbReference type="PDB" id="5JRO"/>
    </source>
</evidence>
<evidence type="ECO:0007829" key="6">
    <source>
        <dbReference type="PDB" id="4ESE"/>
    </source>
</evidence>
<comment type="function">
    <text evidence="2">Quinone reductase that provides resistance to thiol-specific stress caused by electrophilic quinones.</text>
</comment>
<comment type="function">
    <text evidence="2">Also exhibits azoreductase activity. Catalyzes the reductive cleavage of the azo bond in aromatic azo compounds to the corresponding amines.</text>
</comment>
<comment type="catalytic activity">
    <reaction evidence="2">
        <text>2 a quinone + NADH + H(+) = 2 a 1,4-benzosemiquinone + NAD(+)</text>
        <dbReference type="Rhea" id="RHEA:65952"/>
        <dbReference type="ChEBI" id="CHEBI:15378"/>
        <dbReference type="ChEBI" id="CHEBI:57540"/>
        <dbReference type="ChEBI" id="CHEBI:57945"/>
        <dbReference type="ChEBI" id="CHEBI:132124"/>
        <dbReference type="ChEBI" id="CHEBI:134225"/>
    </reaction>
</comment>
<comment type="catalytic activity">
    <reaction evidence="2">
        <text>N,N-dimethyl-1,4-phenylenediamine + anthranilate + 2 NAD(+) = 2-(4-dimethylaminophenyl)diazenylbenzoate + 2 NADH + 2 H(+)</text>
        <dbReference type="Rhea" id="RHEA:55872"/>
        <dbReference type="ChEBI" id="CHEBI:15378"/>
        <dbReference type="ChEBI" id="CHEBI:15783"/>
        <dbReference type="ChEBI" id="CHEBI:16567"/>
        <dbReference type="ChEBI" id="CHEBI:57540"/>
        <dbReference type="ChEBI" id="CHEBI:57945"/>
        <dbReference type="ChEBI" id="CHEBI:71579"/>
        <dbReference type="EC" id="1.7.1.17"/>
    </reaction>
</comment>
<comment type="cofactor">
    <cofactor evidence="2">
        <name>FMN</name>
        <dbReference type="ChEBI" id="CHEBI:58210"/>
    </cofactor>
    <text evidence="2">Binds 1 FMN per subunit.</text>
</comment>
<comment type="subunit">
    <text evidence="2">Homodimer.</text>
</comment>
<comment type="similarity">
    <text evidence="2">Belongs to the azoreductase type 1 family.</text>
</comment>
<name>AZOR_YERPE</name>